<proteinExistence type="inferred from homology"/>
<dbReference type="EC" id="2.1.1.-" evidence="2"/>
<dbReference type="EMBL" id="BX284603">
    <property type="protein sequence ID" value="CAB07618.1"/>
    <property type="molecule type" value="Genomic_DNA"/>
</dbReference>
<dbReference type="PIR" id="T22241">
    <property type="entry name" value="T22241"/>
</dbReference>
<dbReference type="RefSeq" id="NP_499776.1">
    <property type="nucleotide sequence ID" value="NM_067375.5"/>
</dbReference>
<dbReference type="SMR" id="O62251"/>
<dbReference type="FunCoup" id="O62251">
    <property type="interactions" value="2477"/>
</dbReference>
<dbReference type="STRING" id="6239.F45G2.9.1"/>
<dbReference type="PaxDb" id="6239-F45G2.9"/>
<dbReference type="EnsemblMetazoa" id="F45G2.9.1">
    <property type="protein sequence ID" value="F45G2.9.1"/>
    <property type="gene ID" value="WBGene00009735"/>
</dbReference>
<dbReference type="GeneID" id="185813"/>
<dbReference type="KEGG" id="cel:CELE_F45G2.9"/>
<dbReference type="UCSC" id="F45G2.9">
    <property type="organism name" value="c. elegans"/>
</dbReference>
<dbReference type="AGR" id="WB:WBGene00009735"/>
<dbReference type="CTD" id="185813"/>
<dbReference type="WormBase" id="F45G2.9">
    <property type="protein sequence ID" value="CE16052"/>
    <property type="gene ID" value="WBGene00009735"/>
</dbReference>
<dbReference type="eggNOG" id="KOG4589">
    <property type="taxonomic scope" value="Eukaryota"/>
</dbReference>
<dbReference type="GeneTree" id="ENSGT00730000111241"/>
<dbReference type="HOGENOM" id="CLU_009422_4_2_1"/>
<dbReference type="InParanoid" id="O62251"/>
<dbReference type="OMA" id="HRQTDHL"/>
<dbReference type="OrthoDB" id="20105at2759"/>
<dbReference type="PhylomeDB" id="O62251"/>
<dbReference type="PRO" id="PR:O62251"/>
<dbReference type="Proteomes" id="UP000001940">
    <property type="component" value="Chromosome III"/>
</dbReference>
<dbReference type="Bgee" id="WBGene00009735">
    <property type="expression patterns" value="Expressed in germ line (C elegans) and 4 other cell types or tissues"/>
</dbReference>
<dbReference type="GO" id="GO:0005739">
    <property type="term" value="C:mitochondrion"/>
    <property type="evidence" value="ECO:0000318"/>
    <property type="project" value="GO_Central"/>
</dbReference>
<dbReference type="GO" id="GO:0008650">
    <property type="term" value="F:rRNA (uridine-2'-O-)-methyltransferase activity"/>
    <property type="evidence" value="ECO:0000318"/>
    <property type="project" value="GO_Central"/>
</dbReference>
<dbReference type="GO" id="GO:0001510">
    <property type="term" value="P:RNA methylation"/>
    <property type="evidence" value="ECO:0000318"/>
    <property type="project" value="GO_Central"/>
</dbReference>
<dbReference type="Gene3D" id="3.40.50.150">
    <property type="entry name" value="Vaccinia Virus protein VP39"/>
    <property type="match status" value="1"/>
</dbReference>
<dbReference type="HAMAP" id="MF_01547">
    <property type="entry name" value="RNA_methyltr_E"/>
    <property type="match status" value="1"/>
</dbReference>
<dbReference type="InterPro" id="IPR050082">
    <property type="entry name" value="RNA_methyltr_RlmE"/>
</dbReference>
<dbReference type="InterPro" id="IPR002877">
    <property type="entry name" value="RNA_MeTrfase_FtsJ_dom"/>
</dbReference>
<dbReference type="InterPro" id="IPR015507">
    <property type="entry name" value="rRNA-MeTfrase_E"/>
</dbReference>
<dbReference type="InterPro" id="IPR029063">
    <property type="entry name" value="SAM-dependent_MTases_sf"/>
</dbReference>
<dbReference type="PANTHER" id="PTHR10920">
    <property type="entry name" value="RIBOSOMAL RNA METHYLTRANSFERASE"/>
    <property type="match status" value="1"/>
</dbReference>
<dbReference type="PANTHER" id="PTHR10920:SF18">
    <property type="entry name" value="RRNA METHYLTRANSFERASE 2, MITOCHONDRIAL"/>
    <property type="match status" value="1"/>
</dbReference>
<dbReference type="Pfam" id="PF01728">
    <property type="entry name" value="FtsJ"/>
    <property type="match status" value="1"/>
</dbReference>
<dbReference type="PIRSF" id="PIRSF005461">
    <property type="entry name" value="23S_rRNA_mtase"/>
    <property type="match status" value="1"/>
</dbReference>
<dbReference type="SUPFAM" id="SSF53335">
    <property type="entry name" value="S-adenosyl-L-methionine-dependent methyltransferases"/>
    <property type="match status" value="1"/>
</dbReference>
<name>MRM2_CAEEL</name>
<organism>
    <name type="scientific">Caenorhabditis elegans</name>
    <dbReference type="NCBI Taxonomy" id="6239"/>
    <lineage>
        <taxon>Eukaryota</taxon>
        <taxon>Metazoa</taxon>
        <taxon>Ecdysozoa</taxon>
        <taxon>Nematoda</taxon>
        <taxon>Chromadorea</taxon>
        <taxon>Rhabditida</taxon>
        <taxon>Rhabditina</taxon>
        <taxon>Rhabditomorpha</taxon>
        <taxon>Rhabditoidea</taxon>
        <taxon>Rhabditidae</taxon>
        <taxon>Peloderinae</taxon>
        <taxon>Caenorhabditis</taxon>
    </lineage>
</organism>
<accession>O62251</accession>
<comment type="function">
    <text evidence="2 5">S-adenosyl-L-methionine-dependent 2'-O-ribose methyltransferase that catalyzes the formation of 2'-O-methyluridine at position 808 (Um808) in the mitochondrial large subunit ribosomal RNA (mtLSU rRNA), a universally conserved modification in the peptidyl transferase domain of the mtLSU rRNA. This activity may require prior 2'-O-methylguanosine modification at position 809 (Gm809) by MRM3. Essential for late-stage assembly of mtLSU required for efficient translation of mitochondrial DNA encoded proteins; methyltransferase activity is not required for this function. Essential for mitochondrial respiratory function.</text>
</comment>
<comment type="catalytic activity">
    <reaction evidence="2">
        <text>a uridine in rRNA + S-adenosyl-L-methionine = a 2'-O-methyluridine in rRNA + S-adenosyl-L-homocysteine + H(+)</text>
        <dbReference type="Rhea" id="RHEA:54152"/>
        <dbReference type="Rhea" id="RHEA-COMP:13812"/>
        <dbReference type="Rhea" id="RHEA-COMP:13814"/>
        <dbReference type="ChEBI" id="CHEBI:15378"/>
        <dbReference type="ChEBI" id="CHEBI:57856"/>
        <dbReference type="ChEBI" id="CHEBI:59789"/>
        <dbReference type="ChEBI" id="CHEBI:65315"/>
        <dbReference type="ChEBI" id="CHEBI:74478"/>
    </reaction>
</comment>
<comment type="subcellular location">
    <subcellularLocation>
        <location evidence="2">Mitochondrion</location>
    </subcellularLocation>
</comment>
<comment type="similarity">
    <text evidence="4">Belongs to the class I-like SAM-binding methyltransferase superfamily. RNA methyltransferase RlmE family.</text>
</comment>
<sequence length="214" mass="24297">MFSTKKSQGNLHKYIQRQSTDEFAVKAREHNYRARSAFKLIEINEKFKFLKPESTVIDIGCAPGSWLQVVVQKCPNGYASGVDLQNVLPIRGADILSLSDITDPAVKLKIREKLAHRQVDVVLSDMAPNPTGDNATDHLRLIELCRSVFRLFSVENEIELVKNGVYLCKIWDGSARAEFVRELSDRFSTVKTVKPTACRDNSAELYLFCRNFKK</sequence>
<protein>
    <recommendedName>
        <fullName evidence="2">rRNA methyltransferase 2, mitochondrial</fullName>
        <ecNumber evidence="2">2.1.1.-</ecNumber>
    </recommendedName>
    <alternativeName>
        <fullName evidence="2">rRNA (uridine-2'-O)-methyltransferase</fullName>
    </alternativeName>
</protein>
<evidence type="ECO:0000250" key="1">
    <source>
        <dbReference type="UniProtKB" id="P0C0R7"/>
    </source>
</evidence>
<evidence type="ECO:0000250" key="2">
    <source>
        <dbReference type="UniProtKB" id="Q9UI43"/>
    </source>
</evidence>
<evidence type="ECO:0000255" key="3"/>
<evidence type="ECO:0000305" key="4"/>
<evidence type="ECO:0000305" key="5">
    <source>
    </source>
</evidence>
<reference key="1">
    <citation type="journal article" date="1998" name="Science">
        <title>Genome sequence of the nematode C. elegans: a platform for investigating biology.</title>
        <authorList>
            <consortium name="The C. elegans sequencing consortium"/>
        </authorList>
    </citation>
    <scope>NUCLEOTIDE SEQUENCE [LARGE SCALE GENOMIC DNA]</scope>
    <source>
        <strain>Bristol N2</strain>
    </source>
</reference>
<reference key="2">
    <citation type="journal article" date="2014" name="Mol. Biol. Cell">
        <title>MRM2 and MRM3 are involved in biogenesis of the large subunit of the mitochondrial ribosome.</title>
        <authorList>
            <person name="Rorbach J."/>
            <person name="Boesch P."/>
            <person name="Gammage P.A."/>
            <person name="Nicholls T.J."/>
            <person name="Pearce S.F."/>
            <person name="Patel D."/>
            <person name="Hauser A."/>
            <person name="Perocchi F."/>
            <person name="Minczuk M."/>
        </authorList>
    </citation>
    <scope>POSITION OF MODIFIED METHYLURIDINE IN MTLSU RRNA</scope>
</reference>
<keyword id="KW-0489">Methyltransferase</keyword>
<keyword id="KW-0496">Mitochondrion</keyword>
<keyword id="KW-1185">Reference proteome</keyword>
<keyword id="KW-0698">rRNA processing</keyword>
<keyword id="KW-0949">S-adenosyl-L-methionine</keyword>
<keyword id="KW-0808">Transferase</keyword>
<keyword id="KW-0809">Transit peptide</keyword>
<feature type="transit peptide" description="Mitochondrion" evidence="3">
    <location>
        <begin position="1"/>
        <end position="18"/>
    </location>
</feature>
<feature type="chain" id="PRO_0000155585" description="rRNA methyltransferase 2, mitochondrial">
    <location>
        <begin position="19"/>
        <end position="214"/>
    </location>
</feature>
<feature type="active site" description="Proton acceptor" evidence="1">
    <location>
        <position position="169"/>
    </location>
</feature>
<feature type="binding site" evidence="2">
    <location>
        <begin position="63"/>
        <end position="66"/>
    </location>
    <ligand>
        <name>S-adenosyl-L-methionine</name>
        <dbReference type="ChEBI" id="CHEBI:59789"/>
    </ligand>
</feature>
<feature type="binding site" evidence="2">
    <location>
        <position position="83"/>
    </location>
    <ligand>
        <name>S-adenosyl-L-methionine</name>
        <dbReference type="ChEBI" id="CHEBI:59789"/>
    </ligand>
</feature>
<feature type="binding site" evidence="2">
    <location>
        <begin position="100"/>
        <end position="101"/>
    </location>
    <ligand>
        <name>S-adenosyl-L-methionine</name>
        <dbReference type="ChEBI" id="CHEBI:59789"/>
    </ligand>
</feature>
<feature type="binding site" evidence="2">
    <location>
        <position position="125"/>
    </location>
    <ligand>
        <name>S-adenosyl-L-methionine</name>
        <dbReference type="ChEBI" id="CHEBI:59789"/>
    </ligand>
</feature>
<gene>
    <name type="ORF">F45G2.9</name>
</gene>